<evidence type="ECO:0000255" key="1"/>
<evidence type="ECO:0000269" key="2">
    <source>
    </source>
</evidence>
<evidence type="ECO:0000269" key="3">
    <source>
    </source>
</evidence>
<evidence type="ECO:0000303" key="4">
    <source>
    </source>
</evidence>
<evidence type="ECO:0000305" key="5"/>
<evidence type="ECO:0000305" key="6">
    <source>
    </source>
</evidence>
<evidence type="ECO:0000305" key="7">
    <source>
    </source>
</evidence>
<evidence type="ECO:0000312" key="8">
    <source>
        <dbReference type="EMBL" id="JZ469092"/>
    </source>
</evidence>
<evidence type="ECO:0000312" key="9">
    <source>
        <dbReference type="EMBL" id="JZ469093"/>
    </source>
</evidence>
<accession>P0DY15</accession>
<comment type="function">
    <text evidence="3">Antimicrobial peptide with moderate activity against Gram-positive bacteria and Gram-negative bacteria, as well as low activity against fungi. Acts by inducing bacterial membrane disruption. Shows activity against B.subtilis (MIC=4 ug/ml), S.epidermidis (MIC=64 ug/ml), S.aureus (MIC=32 ug/ml), E.coli (MIC=128 ug/ml), K.pneumoniae (MIC=64 ug/ml), P.aeruginosa (MIC=64 ug/ml), and C.albicans (MIC=128 ug/ml). Does not show hemolysis activity.</text>
</comment>
<comment type="subcellular location">
    <subcellularLocation>
        <location evidence="2">Secreted</location>
    </subcellularLocation>
    <subcellularLocation>
        <location evidence="3">Target cell membrane</location>
    </subcellularLocation>
    <text evidence="7">May disturb membranes through a carpet-like mechanism.</text>
</comment>
<comment type="tissue specificity">
    <text evidence="6">Expressed by the venom gland.</text>
</comment>
<comment type="domain">
    <text evidence="3">Forms an alpha-helical structure in membrane-mimicking environment.</text>
</comment>
<comment type="similarity">
    <text evidence="5">Belongs to the non-disulfide-bridged peptide (NDBP) superfamily. Long chain multifunctional peptide (group 2) family.</text>
</comment>
<keyword id="KW-0044">Antibiotic</keyword>
<keyword id="KW-0929">Antimicrobial</keyword>
<keyword id="KW-0472">Membrane</keyword>
<keyword id="KW-0964">Secreted</keyword>
<keyword id="KW-0732">Signal</keyword>
<keyword id="KW-1052">Target cell membrane</keyword>
<keyword id="KW-1053">Target membrane</keyword>
<dbReference type="EMBL" id="JZ469092">
    <property type="status" value="NOT_ANNOTATED_CDS"/>
    <property type="molecule type" value="mRNA"/>
</dbReference>
<dbReference type="EMBL" id="JZ469093">
    <property type="status" value="NOT_ANNOTATED_CDS"/>
    <property type="molecule type" value="mRNA"/>
</dbReference>
<dbReference type="InterPro" id="IPR012526">
    <property type="entry name" value="Antimicrobial_7"/>
</dbReference>
<dbReference type="Pfam" id="PF08102">
    <property type="entry name" value="Antimicrobial_7"/>
    <property type="match status" value="1"/>
</dbReference>
<name>NDB23_SCOPA</name>
<proteinExistence type="evidence at protein level"/>
<organism>
    <name type="scientific">Scorpio palmatus</name>
    <name type="common">Israeli golden scorpion</name>
    <name type="synonym">Scorpio maurus palmatus</name>
    <dbReference type="NCBI Taxonomy" id="1662106"/>
    <lineage>
        <taxon>Eukaryota</taxon>
        <taxon>Metazoa</taxon>
        <taxon>Ecdysozoa</taxon>
        <taxon>Arthropoda</taxon>
        <taxon>Chelicerata</taxon>
        <taxon>Arachnida</taxon>
        <taxon>Scorpiones</taxon>
        <taxon>Iurida</taxon>
        <taxon>Scorpionoidea</taxon>
        <taxon>Scorpionidae</taxon>
        <taxon>Scorpioninae</taxon>
        <taxon>Scorpio</taxon>
    </lineage>
</organism>
<protein>
    <recommendedName>
        <fullName evidence="4">Antimicrobial peptide Smp43</fullName>
    </recommendedName>
</protein>
<feature type="signal peptide" evidence="1">
    <location>
        <begin position="1"/>
        <end position="22"/>
    </location>
</feature>
<feature type="peptide" id="PRO_0000461907" description="Antimicrobial peptide Smp43" evidence="3">
    <location>
        <begin position="23"/>
        <end position="65"/>
    </location>
</feature>
<feature type="propeptide" id="PRO_0000461908" evidence="6">
    <location>
        <begin position="66"/>
        <end position="82"/>
    </location>
</feature>
<sequence length="82" mass="9144">MNRKLLLVTLMVTMLVMQPAEAGVWDWIKKTAGKIWNSEPVKALKSQALNAAKNFVAEKIGATPSEAGQMPFDEFMDILYES</sequence>
<reference evidence="8 9" key="1">
    <citation type="journal article" date="2013" name="Toxicon">
        <title>Venom proteomic and venomous glands transcriptomic analysis of the Egyptian scorpion Scorpio maurus palmatus (Arachnida: Scorpionidae).</title>
        <authorList>
            <person name="Abdel-Rahman M.A."/>
            <person name="Quintero-Hernandez V."/>
            <person name="Possani L.D."/>
        </authorList>
    </citation>
    <scope>NUCLEOTIDE SEQUENCE [MRNA]</scope>
    <scope>IDENTIFICATION BY MASS SPECTROMETRY</scope>
    <scope>SUBCELLULAR LOCATION</scope>
    <source>
        <tissue>Venom</tissue>
        <tissue>Venom gland</tissue>
    </source>
</reference>
<reference key="2">
    <citation type="journal article" date="2016" name="Toxicon">
        <title>Characterisation of three alpha-helical antimicrobial peptides from the venom of Scorpio maurus palmatus.</title>
        <authorList>
            <person name="Harrison P.L."/>
            <person name="Abdel-Rahman M.A."/>
            <person name="Strong P.N."/>
            <person name="Tawfik M.M."/>
            <person name="Miller K."/>
        </authorList>
    </citation>
    <scope>FUNCTION</scope>
    <scope>SYNTHESIS OF 23-65</scope>
    <scope>SUBCELLULAR LOCATION</scope>
    <scope>CIRCULAR DICHROISM ANALYSIS</scope>
</reference>